<reference key="1">
    <citation type="journal article" date="2007" name="J. Bacteriol.">
        <title>The complete genome sequence of Bacillus thuringiensis Al Hakam.</title>
        <authorList>
            <person name="Challacombe J.F."/>
            <person name="Altherr M.R."/>
            <person name="Xie G."/>
            <person name="Bhotika S.S."/>
            <person name="Brown N."/>
            <person name="Bruce D."/>
            <person name="Campbell C.S."/>
            <person name="Campbell M.L."/>
            <person name="Chen J."/>
            <person name="Chertkov O."/>
            <person name="Cleland C."/>
            <person name="Dimitrijevic M."/>
            <person name="Doggett N.A."/>
            <person name="Fawcett J.J."/>
            <person name="Glavina T."/>
            <person name="Goodwin L.A."/>
            <person name="Green L.D."/>
            <person name="Han C.S."/>
            <person name="Hill K.K."/>
            <person name="Hitchcock P."/>
            <person name="Jackson P.J."/>
            <person name="Keim P."/>
            <person name="Kewalramani A.R."/>
            <person name="Longmire J."/>
            <person name="Lucas S."/>
            <person name="Malfatti S."/>
            <person name="Martinez D."/>
            <person name="McMurry K."/>
            <person name="Meincke L.J."/>
            <person name="Misra M."/>
            <person name="Moseman B.L."/>
            <person name="Mundt M."/>
            <person name="Munk A.C."/>
            <person name="Okinaka R.T."/>
            <person name="Parson-Quintana B."/>
            <person name="Reilly L.P."/>
            <person name="Richardson P."/>
            <person name="Robinson D.L."/>
            <person name="Saunders E."/>
            <person name="Tapia R."/>
            <person name="Tesmer J.G."/>
            <person name="Thayer N."/>
            <person name="Thompson L.S."/>
            <person name="Tice H."/>
            <person name="Ticknor L.O."/>
            <person name="Wills P.L."/>
            <person name="Gilna P."/>
            <person name="Brettin T.S."/>
        </authorList>
    </citation>
    <scope>NUCLEOTIDE SEQUENCE [LARGE SCALE GENOMIC DNA]</scope>
    <source>
        <strain>Al Hakam</strain>
    </source>
</reference>
<comment type="function">
    <text evidence="1">Responsible for the release of ribosomes from messenger RNA at the termination of protein biosynthesis. May increase the efficiency of translation by recycling ribosomes from one round of translation to another.</text>
</comment>
<comment type="subcellular location">
    <subcellularLocation>
        <location evidence="1">Cytoplasm</location>
    </subcellularLocation>
</comment>
<comment type="similarity">
    <text evidence="1">Belongs to the RRF family.</text>
</comment>
<accession>A0RHJ7</accession>
<keyword id="KW-0963">Cytoplasm</keyword>
<keyword id="KW-0648">Protein biosynthesis</keyword>
<gene>
    <name evidence="1" type="primary">frr</name>
    <name type="ordered locus">BALH_3455</name>
</gene>
<sequence>MGQQVLKSSNEKMEKAVAAYSRELATVRAGRASASVLDKVQVDYYGAPTPVVQLANITVPEARLLVIQPYDKTSIGDIEKAILKADLGLNPSNDGTVIRIAFPALTEERRRDLVKVVKKYAEEAKVAVRNVRRDGNDDLKKLEKAGEITEDDLRGYTEDIQKETDKYIAKVDEIAKNKEKEIMEV</sequence>
<evidence type="ECO:0000255" key="1">
    <source>
        <dbReference type="HAMAP-Rule" id="MF_00040"/>
    </source>
</evidence>
<dbReference type="EMBL" id="CP000485">
    <property type="protein sequence ID" value="ABK86690.1"/>
    <property type="molecule type" value="Genomic_DNA"/>
</dbReference>
<dbReference type="RefSeq" id="WP_000531503.1">
    <property type="nucleotide sequence ID" value="NC_008600.1"/>
</dbReference>
<dbReference type="SMR" id="A0RHJ7"/>
<dbReference type="KEGG" id="btl:BALH_3455"/>
<dbReference type="HOGENOM" id="CLU_073981_2_0_9"/>
<dbReference type="GO" id="GO:0005737">
    <property type="term" value="C:cytoplasm"/>
    <property type="evidence" value="ECO:0007669"/>
    <property type="project" value="UniProtKB-SubCell"/>
</dbReference>
<dbReference type="GO" id="GO:0043023">
    <property type="term" value="F:ribosomal large subunit binding"/>
    <property type="evidence" value="ECO:0007669"/>
    <property type="project" value="TreeGrafter"/>
</dbReference>
<dbReference type="GO" id="GO:0006415">
    <property type="term" value="P:translational termination"/>
    <property type="evidence" value="ECO:0007669"/>
    <property type="project" value="UniProtKB-UniRule"/>
</dbReference>
<dbReference type="CDD" id="cd00520">
    <property type="entry name" value="RRF"/>
    <property type="match status" value="1"/>
</dbReference>
<dbReference type="FunFam" id="1.10.132.20:FF:000001">
    <property type="entry name" value="Ribosome-recycling factor"/>
    <property type="match status" value="1"/>
</dbReference>
<dbReference type="FunFam" id="3.30.1360.40:FF:000001">
    <property type="entry name" value="Ribosome-recycling factor"/>
    <property type="match status" value="1"/>
</dbReference>
<dbReference type="Gene3D" id="3.30.1360.40">
    <property type="match status" value="1"/>
</dbReference>
<dbReference type="Gene3D" id="1.10.132.20">
    <property type="entry name" value="Ribosome-recycling factor"/>
    <property type="match status" value="1"/>
</dbReference>
<dbReference type="HAMAP" id="MF_00040">
    <property type="entry name" value="RRF"/>
    <property type="match status" value="1"/>
</dbReference>
<dbReference type="InterPro" id="IPR002661">
    <property type="entry name" value="Ribosome_recyc_fac"/>
</dbReference>
<dbReference type="InterPro" id="IPR023584">
    <property type="entry name" value="Ribosome_recyc_fac_dom"/>
</dbReference>
<dbReference type="InterPro" id="IPR036191">
    <property type="entry name" value="RRF_sf"/>
</dbReference>
<dbReference type="NCBIfam" id="TIGR00496">
    <property type="entry name" value="frr"/>
    <property type="match status" value="1"/>
</dbReference>
<dbReference type="PANTHER" id="PTHR20982:SF3">
    <property type="entry name" value="MITOCHONDRIAL RIBOSOME RECYCLING FACTOR PSEUDO 1"/>
    <property type="match status" value="1"/>
</dbReference>
<dbReference type="PANTHER" id="PTHR20982">
    <property type="entry name" value="RIBOSOME RECYCLING FACTOR"/>
    <property type="match status" value="1"/>
</dbReference>
<dbReference type="Pfam" id="PF01765">
    <property type="entry name" value="RRF"/>
    <property type="match status" value="1"/>
</dbReference>
<dbReference type="SUPFAM" id="SSF55194">
    <property type="entry name" value="Ribosome recycling factor, RRF"/>
    <property type="match status" value="1"/>
</dbReference>
<feature type="chain" id="PRO_1000003106" description="Ribosome-recycling factor">
    <location>
        <begin position="1"/>
        <end position="185"/>
    </location>
</feature>
<name>RRF_BACAH</name>
<organism>
    <name type="scientific">Bacillus thuringiensis (strain Al Hakam)</name>
    <dbReference type="NCBI Taxonomy" id="412694"/>
    <lineage>
        <taxon>Bacteria</taxon>
        <taxon>Bacillati</taxon>
        <taxon>Bacillota</taxon>
        <taxon>Bacilli</taxon>
        <taxon>Bacillales</taxon>
        <taxon>Bacillaceae</taxon>
        <taxon>Bacillus</taxon>
        <taxon>Bacillus cereus group</taxon>
    </lineage>
</organism>
<proteinExistence type="inferred from homology"/>
<protein>
    <recommendedName>
        <fullName evidence="1">Ribosome-recycling factor</fullName>
        <shortName evidence="1">RRF</shortName>
    </recommendedName>
    <alternativeName>
        <fullName evidence="1">Ribosome-releasing factor</fullName>
    </alternativeName>
</protein>